<proteinExistence type="evidence at protein level"/>
<feature type="chain" id="PRO_0000443819" description="Petrobactin import ATP-binding protein FpuD">
    <location>
        <begin position="1"/>
        <end position="273"/>
    </location>
</feature>
<feature type="domain" description="ABC transporter" evidence="1">
    <location>
        <begin position="5"/>
        <end position="241"/>
    </location>
</feature>
<feature type="binding site" evidence="1">
    <location>
        <begin position="37"/>
        <end position="44"/>
    </location>
    <ligand>
        <name>ATP</name>
        <dbReference type="ChEBI" id="CHEBI:30616"/>
    </ligand>
</feature>
<protein>
    <recommendedName>
        <fullName evidence="4">Petrobactin import ATP-binding protein FpuD</fullName>
        <ecNumber evidence="5">7.2.2.-</ecNumber>
    </recommendedName>
</protein>
<comment type="function">
    <text evidence="2">Part of an ABC transporter complex involved in ferric-petrobactin uptake. Probably responsible for energy coupling to the transport system.</text>
</comment>
<comment type="catalytic activity">
    <reaction evidence="5">
        <text>a Fe(III)-siderophore(out) + ATP + H2O = a Fe(III)-siderophore(in) + ADP + phosphate + H(+)</text>
        <dbReference type="Rhea" id="RHEA:15597"/>
        <dbReference type="Rhea" id="RHEA-COMP:11342"/>
        <dbReference type="ChEBI" id="CHEBI:15377"/>
        <dbReference type="ChEBI" id="CHEBI:15378"/>
        <dbReference type="ChEBI" id="CHEBI:29034"/>
        <dbReference type="ChEBI" id="CHEBI:30616"/>
        <dbReference type="ChEBI" id="CHEBI:43474"/>
        <dbReference type="ChEBI" id="CHEBI:456216"/>
    </reaction>
</comment>
<comment type="subunit">
    <text evidence="5">The complex is composed of two ATP-binding proteins (FpuD), two transmembrane proteins (FpuB) and a solute-binding protein (FpuA).</text>
</comment>
<comment type="subcellular location">
    <subcellularLocation>
        <location evidence="5">Cell membrane</location>
        <topology evidence="5">Peripheral membrane protein</topology>
        <orientation evidence="5">Cytoplasmic side</orientation>
    </subcellularLocation>
</comment>
<comment type="disruption phenotype">
    <text evidence="2">A mutant lacking fatE, fpuC and fpuD ATPases is deficient in petrobactin import in iron-depleted conditions.</text>
</comment>
<comment type="similarity">
    <text evidence="4">Belongs to the ABC transporter superfamily.</text>
</comment>
<gene>
    <name evidence="3" type="primary">fpuD</name>
    <name evidence="6" type="ordered locus">GBAA_0618</name>
</gene>
<name>FPUD_BACAN</name>
<dbReference type="EC" id="7.2.2.-" evidence="5"/>
<dbReference type="EMBL" id="AE017334">
    <property type="protein sequence ID" value="AAT29720.1"/>
    <property type="molecule type" value="Genomic_DNA"/>
</dbReference>
<dbReference type="RefSeq" id="WP_001167965.1">
    <property type="nucleotide sequence ID" value="NZ_WXXJ01000017.1"/>
</dbReference>
<dbReference type="SMR" id="Q81V82"/>
<dbReference type="STRING" id="261594.GBAA_0618"/>
<dbReference type="DNASU" id="1088006"/>
<dbReference type="GeneID" id="45020679"/>
<dbReference type="KEGG" id="bar:GBAA_0618"/>
<dbReference type="PATRIC" id="fig|1392.230.peg.611"/>
<dbReference type="HOGENOM" id="CLU_000604_1_11_9"/>
<dbReference type="OMA" id="MNCQVTQ"/>
<dbReference type="OrthoDB" id="9787851at2"/>
<dbReference type="Proteomes" id="UP000000594">
    <property type="component" value="Chromosome"/>
</dbReference>
<dbReference type="GO" id="GO:0005886">
    <property type="term" value="C:plasma membrane"/>
    <property type="evidence" value="ECO:0007669"/>
    <property type="project" value="UniProtKB-SubCell"/>
</dbReference>
<dbReference type="GO" id="GO:0005524">
    <property type="term" value="F:ATP binding"/>
    <property type="evidence" value="ECO:0007669"/>
    <property type="project" value="UniProtKB-KW"/>
</dbReference>
<dbReference type="GO" id="GO:0016887">
    <property type="term" value="F:ATP hydrolysis activity"/>
    <property type="evidence" value="ECO:0007669"/>
    <property type="project" value="InterPro"/>
</dbReference>
<dbReference type="GO" id="GO:0006826">
    <property type="term" value="P:iron ion transport"/>
    <property type="evidence" value="ECO:0007669"/>
    <property type="project" value="UniProtKB-KW"/>
</dbReference>
<dbReference type="CDD" id="cd03214">
    <property type="entry name" value="ABC_Iron-Siderophores_B12_Hemin"/>
    <property type="match status" value="1"/>
</dbReference>
<dbReference type="FunFam" id="3.40.50.300:FF:000134">
    <property type="entry name" value="Iron-enterobactin ABC transporter ATP-binding protein"/>
    <property type="match status" value="1"/>
</dbReference>
<dbReference type="Gene3D" id="3.40.50.300">
    <property type="entry name" value="P-loop containing nucleotide triphosphate hydrolases"/>
    <property type="match status" value="1"/>
</dbReference>
<dbReference type="InterPro" id="IPR003593">
    <property type="entry name" value="AAA+_ATPase"/>
</dbReference>
<dbReference type="InterPro" id="IPR003439">
    <property type="entry name" value="ABC_transporter-like_ATP-bd"/>
</dbReference>
<dbReference type="InterPro" id="IPR017871">
    <property type="entry name" value="ABC_transporter-like_CS"/>
</dbReference>
<dbReference type="InterPro" id="IPR027417">
    <property type="entry name" value="P-loop_NTPase"/>
</dbReference>
<dbReference type="InterPro" id="IPR051535">
    <property type="entry name" value="Siderophore_ABC-ATPase"/>
</dbReference>
<dbReference type="PANTHER" id="PTHR42771">
    <property type="entry name" value="IRON(3+)-HYDROXAMATE IMPORT ATP-BINDING PROTEIN FHUC"/>
    <property type="match status" value="1"/>
</dbReference>
<dbReference type="PANTHER" id="PTHR42771:SF2">
    <property type="entry name" value="IRON(3+)-HYDROXAMATE IMPORT ATP-BINDING PROTEIN FHUC"/>
    <property type="match status" value="1"/>
</dbReference>
<dbReference type="Pfam" id="PF00005">
    <property type="entry name" value="ABC_tran"/>
    <property type="match status" value="1"/>
</dbReference>
<dbReference type="SMART" id="SM00382">
    <property type="entry name" value="AAA"/>
    <property type="match status" value="1"/>
</dbReference>
<dbReference type="SUPFAM" id="SSF52540">
    <property type="entry name" value="P-loop containing nucleoside triphosphate hydrolases"/>
    <property type="match status" value="1"/>
</dbReference>
<dbReference type="PROSITE" id="PS00211">
    <property type="entry name" value="ABC_TRANSPORTER_1"/>
    <property type="match status" value="1"/>
</dbReference>
<dbReference type="PROSITE" id="PS50893">
    <property type="entry name" value="ABC_TRANSPORTER_2"/>
    <property type="match status" value="1"/>
</dbReference>
<keyword id="KW-0067">ATP-binding</keyword>
<keyword id="KW-1003">Cell membrane</keyword>
<keyword id="KW-0406">Ion transport</keyword>
<keyword id="KW-0408">Iron</keyword>
<keyword id="KW-0410">Iron transport</keyword>
<keyword id="KW-0472">Membrane</keyword>
<keyword id="KW-0547">Nucleotide-binding</keyword>
<keyword id="KW-1185">Reference proteome</keyword>
<keyword id="KW-1278">Translocase</keyword>
<keyword id="KW-0813">Transport</keyword>
<accession>Q81V82</accession>
<accession>E9QZT1</accession>
<accession>E9QZT2</accession>
<accession>Q6I3G9</accession>
<accession>Q6KX82</accession>
<sequence length="273" mass="30887">MQKALETKRLTLSYGETIIIDELNLEIPKGEITIFIGSNGCGKSTLLRSLARLLKPTTGDILLDNQAIQSMQTKQIARQMAILPQGPQAPEGLTVLQLVKQGRYPYQTWLKQWSEKDEEMVQNALAATGMTEFAERDVHALSGGQRQRAWIAMTLAQDTDIILLDEPTTYLDMTHQIEVLDLLFELNETEQRTIVMVLHDLNLACRYADNIVAIQDKQIYAQGKPEEVVDEKLVRDVFRMECQISTDPLFGTPLCIPHGKGRRVRKEVAHAMR</sequence>
<evidence type="ECO:0000255" key="1">
    <source>
        <dbReference type="PROSITE-ProRule" id="PRU00434"/>
    </source>
</evidence>
<evidence type="ECO:0000269" key="2">
    <source>
    </source>
</evidence>
<evidence type="ECO:0000303" key="3">
    <source>
    </source>
</evidence>
<evidence type="ECO:0000305" key="4"/>
<evidence type="ECO:0000305" key="5">
    <source>
    </source>
</evidence>
<evidence type="ECO:0000312" key="6">
    <source>
        <dbReference type="EMBL" id="AAT29720.1"/>
    </source>
</evidence>
<reference key="1">
    <citation type="journal article" date="2009" name="J. Bacteriol.">
        <title>The complete genome sequence of Bacillus anthracis Ames 'Ancestor'.</title>
        <authorList>
            <person name="Ravel J."/>
            <person name="Jiang L."/>
            <person name="Stanley S.T."/>
            <person name="Wilson M.R."/>
            <person name="Decker R.S."/>
            <person name="Read T.D."/>
            <person name="Worsham P."/>
            <person name="Keim P.S."/>
            <person name="Salzberg S.L."/>
            <person name="Fraser-Liggett C.M."/>
            <person name="Rasko D.A."/>
        </authorList>
    </citation>
    <scope>NUCLEOTIDE SEQUENCE [LARGE SCALE GENOMIC DNA]</scope>
    <source>
        <strain>Ames ancestor</strain>
    </source>
</reference>
<reference key="2">
    <citation type="journal article" date="2012" name="Mol. Microbiol.">
        <title>Multiple ABC transporters are involved in the acquisition of petrobactin in Bacillus anthracis.</title>
        <authorList>
            <person name="Dixon S.D."/>
            <person name="Janes B.K."/>
            <person name="Bourgis A."/>
            <person name="Carlson P.E. Jr."/>
            <person name="Hanna P.C."/>
        </authorList>
    </citation>
    <scope>FUNCTION</scope>
    <scope>CATALYTIC ACTIVITY</scope>
    <scope>SUBUNIT</scope>
    <scope>SUBCELLULAR LOCATION</scope>
    <scope>DISRUPTION PHENOTYPE</scope>
    <source>
        <strain>Sterne</strain>
    </source>
</reference>
<organism>
    <name type="scientific">Bacillus anthracis</name>
    <dbReference type="NCBI Taxonomy" id="1392"/>
    <lineage>
        <taxon>Bacteria</taxon>
        <taxon>Bacillati</taxon>
        <taxon>Bacillota</taxon>
        <taxon>Bacilli</taxon>
        <taxon>Bacillales</taxon>
        <taxon>Bacillaceae</taxon>
        <taxon>Bacillus</taxon>
        <taxon>Bacillus cereus group</taxon>
    </lineage>
</organism>